<organismHost>
    <name type="scientific">Oryctolagus cuniculus</name>
    <name type="common">Rabbit</name>
    <dbReference type="NCBI Taxonomy" id="9986"/>
</organismHost>
<keyword id="KW-0244">Early protein</keyword>
<keyword id="KW-0378">Hydrolase</keyword>
<keyword id="KW-0460">Magnesium</keyword>
<keyword id="KW-0479">Metal-binding</keyword>
<keyword id="KW-0546">Nucleotide metabolism</keyword>
<dbReference type="EC" id="3.6.1.23"/>
<dbReference type="EMBL" id="AY484669">
    <property type="protein sequence ID" value="AAS49743.1"/>
    <property type="molecule type" value="Genomic_DNA"/>
</dbReference>
<dbReference type="SMR" id="Q6RZR1"/>
<dbReference type="Proteomes" id="UP000166173">
    <property type="component" value="Segment"/>
</dbReference>
<dbReference type="GO" id="GO:0004170">
    <property type="term" value="F:dUTP diphosphatase activity"/>
    <property type="evidence" value="ECO:0007669"/>
    <property type="project" value="UniProtKB-EC"/>
</dbReference>
<dbReference type="GO" id="GO:0000287">
    <property type="term" value="F:magnesium ion binding"/>
    <property type="evidence" value="ECO:0007669"/>
    <property type="project" value="InterPro"/>
</dbReference>
<dbReference type="GO" id="GO:0006226">
    <property type="term" value="P:dUMP biosynthetic process"/>
    <property type="evidence" value="ECO:0007669"/>
    <property type="project" value="InterPro"/>
</dbReference>
<dbReference type="GO" id="GO:0046081">
    <property type="term" value="P:dUTP catabolic process"/>
    <property type="evidence" value="ECO:0007669"/>
    <property type="project" value="InterPro"/>
</dbReference>
<dbReference type="CDD" id="cd07557">
    <property type="entry name" value="trimeric_dUTPase"/>
    <property type="match status" value="1"/>
</dbReference>
<dbReference type="Gene3D" id="2.70.40.10">
    <property type="match status" value="1"/>
</dbReference>
<dbReference type="InterPro" id="IPR008181">
    <property type="entry name" value="dUTPase"/>
</dbReference>
<dbReference type="InterPro" id="IPR029054">
    <property type="entry name" value="dUTPase-like"/>
</dbReference>
<dbReference type="InterPro" id="IPR036157">
    <property type="entry name" value="dUTPase-like_sf"/>
</dbReference>
<dbReference type="InterPro" id="IPR033704">
    <property type="entry name" value="dUTPase_trimeric"/>
</dbReference>
<dbReference type="NCBIfam" id="TIGR00576">
    <property type="entry name" value="dut"/>
    <property type="match status" value="1"/>
</dbReference>
<dbReference type="NCBIfam" id="NF001862">
    <property type="entry name" value="PRK00601.1"/>
    <property type="match status" value="1"/>
</dbReference>
<dbReference type="PANTHER" id="PTHR11241">
    <property type="entry name" value="DEOXYURIDINE 5'-TRIPHOSPHATE NUCLEOTIDOHYDROLASE"/>
    <property type="match status" value="1"/>
</dbReference>
<dbReference type="PANTHER" id="PTHR11241:SF0">
    <property type="entry name" value="DEOXYURIDINE 5'-TRIPHOSPHATE NUCLEOTIDOHYDROLASE"/>
    <property type="match status" value="1"/>
</dbReference>
<dbReference type="Pfam" id="PF00692">
    <property type="entry name" value="dUTPase"/>
    <property type="match status" value="1"/>
</dbReference>
<dbReference type="SUPFAM" id="SSF51283">
    <property type="entry name" value="dUTPase-like"/>
    <property type="match status" value="1"/>
</dbReference>
<sequence>MFNMNINSPVRFVKETNRAKSPTRQSPYAAGYDLYSAYDYTIPPGERQLIKTDISMSMPKFCYGRIAPRSGLSLKGIDIGGGVIDEDYRGNIGVILINNGKCTFNVNTGDRIAQLIYQRIYYPELEEVQSLDSTDRGDQGFGSTGLR</sequence>
<proteinExistence type="inferred from homology"/>
<accession>Q6RZR1</accession>
<reference key="1">
    <citation type="journal article" date="2005" name="J. Gen. Virol.">
        <title>Complete coding sequences of the rabbitpox virus genome.</title>
        <authorList>
            <person name="Li G."/>
            <person name="Chen N."/>
            <person name="Roper R.L."/>
            <person name="Feng Z."/>
            <person name="Hunter A.L."/>
            <person name="Danila M."/>
            <person name="Lefkowitz E.J."/>
            <person name="Buller R.M.L."/>
            <person name="Upton C."/>
        </authorList>
    </citation>
    <scope>NUCLEOTIDE SEQUENCE [LARGE SCALE GENOMIC DNA]</scope>
</reference>
<protein>
    <recommendedName>
        <fullName>Deoxyuridine 5'-triphosphate nucleotidohydrolase</fullName>
        <shortName>dUTPase</shortName>
        <ecNumber>3.6.1.23</ecNumber>
    </recommendedName>
    <alternativeName>
        <fullName>dUTP pyrophosphatase</fullName>
    </alternativeName>
</protein>
<organism>
    <name type="scientific">Rabbitpox virus (strain Utrecht)</name>
    <name type="common">RPV</name>
    <dbReference type="NCBI Taxonomy" id="45417"/>
    <lineage>
        <taxon>Viruses</taxon>
        <taxon>Varidnaviria</taxon>
        <taxon>Bamfordvirae</taxon>
        <taxon>Nucleocytoviricota</taxon>
        <taxon>Pokkesviricetes</taxon>
        <taxon>Chitovirales</taxon>
        <taxon>Poxviridae</taxon>
        <taxon>Chordopoxvirinae</taxon>
        <taxon>Orthopoxvirus</taxon>
        <taxon>Vaccinia virus</taxon>
    </lineage>
</organism>
<comment type="function">
    <text evidence="2">This enzyme is involved in nucleotide metabolism: it produces dUMP, the immediate precursor of thymidine nucleotides and it decreases the intracellular concentration of dUTP so that uracil cannot be incorporated into DNA.</text>
</comment>
<comment type="catalytic activity">
    <reaction evidence="2">
        <text>dUTP + H2O = dUMP + diphosphate + H(+)</text>
        <dbReference type="Rhea" id="RHEA:10248"/>
        <dbReference type="ChEBI" id="CHEBI:15377"/>
        <dbReference type="ChEBI" id="CHEBI:15378"/>
        <dbReference type="ChEBI" id="CHEBI:33019"/>
        <dbReference type="ChEBI" id="CHEBI:61555"/>
        <dbReference type="ChEBI" id="CHEBI:246422"/>
        <dbReference type="EC" id="3.6.1.23"/>
    </reaction>
    <physiologicalReaction direction="left-to-right" evidence="2">
        <dbReference type="Rhea" id="RHEA:10249"/>
    </physiologicalReaction>
</comment>
<comment type="cofactor">
    <cofactor evidence="1">
        <name>Mg(2+)</name>
        <dbReference type="ChEBI" id="CHEBI:18420"/>
    </cofactor>
</comment>
<comment type="induction">
    <text evidence="2">Expressed in the early phase of the viral replicative cycle.</text>
</comment>
<comment type="similarity">
    <text evidence="3">Belongs to the dUTPase family.</text>
</comment>
<name>DUT_RABPU</name>
<evidence type="ECO:0000250" key="1"/>
<evidence type="ECO:0000250" key="2">
    <source>
        <dbReference type="UniProtKB" id="P17374"/>
    </source>
</evidence>
<evidence type="ECO:0000305" key="3"/>
<feature type="chain" id="PRO_0000182949" description="Deoxyuridine 5'-triphosphate nucleotidohydrolase">
    <location>
        <begin position="1"/>
        <end position="147"/>
    </location>
</feature>
<feature type="binding site" evidence="2">
    <location>
        <position position="24"/>
    </location>
    <ligand>
        <name>Mg(2+)</name>
        <dbReference type="ChEBI" id="CHEBI:18420"/>
    </ligand>
</feature>
<feature type="binding site" evidence="2">
    <location>
        <begin position="68"/>
        <end position="70"/>
    </location>
    <ligand>
        <name>dUTP</name>
        <dbReference type="ChEBI" id="CHEBI:61555"/>
    </ligand>
</feature>
<feature type="binding site" evidence="2">
    <location>
        <begin position="82"/>
        <end position="85"/>
    </location>
    <ligand>
        <name>dUTP</name>
        <dbReference type="ChEBI" id="CHEBI:61555"/>
    </ligand>
</feature>
<feature type="binding site" evidence="2">
    <location>
        <position position="88"/>
    </location>
    <ligand>
        <name>dUTP</name>
        <dbReference type="ChEBI" id="CHEBI:61555"/>
    </ligand>
</feature>
<feature type="binding site" evidence="2">
    <location>
        <position position="93"/>
    </location>
    <ligand>
        <name>dUTP</name>
        <dbReference type="ChEBI" id="CHEBI:61555"/>
    </ligand>
</feature>
<feature type="binding site" evidence="2">
    <location>
        <position position="95"/>
    </location>
    <ligand>
        <name>dUTP</name>
        <dbReference type="ChEBI" id="CHEBI:61555"/>
    </ligand>
</feature>
<feature type="binding site" evidence="2">
    <location>
        <position position="111"/>
    </location>
    <ligand>
        <name>dUTP</name>
        <dbReference type="ChEBI" id="CHEBI:61555"/>
    </ligand>
</feature>
<gene>
    <name type="primary">OPG046</name>
    <name type="synonym">DUT</name>
    <name type="ordered locus">RPXV030</name>
</gene>